<reference key="1">
    <citation type="submission" date="2007-03" db="EMBL/GenBank/DDBJ databases">
        <title>Sequencing analysis of Arabis hirsuta chloroplast DNA.</title>
        <authorList>
            <person name="Hosouchi T."/>
            <person name="Tsuruoka H."/>
            <person name="Kotani H."/>
        </authorList>
    </citation>
    <scope>NUCLEOTIDE SEQUENCE [LARGE SCALE GENOMIC DNA]</scope>
</reference>
<organism>
    <name type="scientific">Arabis hirsuta</name>
    <name type="common">Hairy rock-cress</name>
    <name type="synonym">Turritis hirsuta</name>
    <dbReference type="NCBI Taxonomy" id="78191"/>
    <lineage>
        <taxon>Eukaryota</taxon>
        <taxon>Viridiplantae</taxon>
        <taxon>Streptophyta</taxon>
        <taxon>Embryophyta</taxon>
        <taxon>Tracheophyta</taxon>
        <taxon>Spermatophyta</taxon>
        <taxon>Magnoliopsida</taxon>
        <taxon>eudicotyledons</taxon>
        <taxon>Gunneridae</taxon>
        <taxon>Pentapetalae</taxon>
        <taxon>rosids</taxon>
        <taxon>malvids</taxon>
        <taxon>Brassicales</taxon>
        <taxon>Brassicaceae</taxon>
        <taxon>Arabideae</taxon>
        <taxon>Arabis</taxon>
    </lineage>
</organism>
<proteinExistence type="inferred from homology"/>
<name>ATPH_ARAHI</name>
<geneLocation type="chloroplast"/>
<protein>
    <recommendedName>
        <fullName evidence="1">ATP synthase subunit c, chloroplastic</fullName>
    </recommendedName>
    <alternativeName>
        <fullName evidence="1">ATP synthase F(0) sector subunit c</fullName>
    </alternativeName>
    <alternativeName>
        <fullName evidence="1">ATPase subunit III</fullName>
    </alternativeName>
    <alternativeName>
        <fullName evidence="1">F-type ATPase subunit c</fullName>
        <shortName evidence="1">F-ATPase subunit c</shortName>
    </alternativeName>
    <alternativeName>
        <fullName evidence="1">Lipid-binding protein</fullName>
    </alternativeName>
</protein>
<evidence type="ECO:0000255" key="1">
    <source>
        <dbReference type="HAMAP-Rule" id="MF_01396"/>
    </source>
</evidence>
<sequence>MNPLVSAASVIAAGLAVGLASIGPGVGQGTAAGQAVEGIARQPEAEGKIRGTLLLSLAFMEALTIYGLVVALALLFANPFV</sequence>
<comment type="function">
    <text evidence="1">F(1)F(0) ATP synthase produces ATP from ADP in the presence of a proton or sodium gradient. F-type ATPases consist of two structural domains, F(1) containing the extramembraneous catalytic core and F(0) containing the membrane proton channel, linked together by a central stalk and a peripheral stalk. During catalysis, ATP synthesis in the catalytic domain of F(1) is coupled via a rotary mechanism of the central stalk subunits to proton translocation.</text>
</comment>
<comment type="function">
    <text evidence="1">Key component of the F(0) channel; it plays a direct role in translocation across the membrane. A homomeric c-ring of between 10-14 subunits forms the central stalk rotor element with the F(1) delta and epsilon subunits.</text>
</comment>
<comment type="subunit">
    <text evidence="1">F-type ATPases have 2 components, F(1) - the catalytic core - and F(0) - the membrane proton channel. F(1) has five subunits: alpha(3), beta(3), gamma(1), delta(1), epsilon(1). F(0) has four main subunits: a(1), b(1), b'(1) and c(10-14). The alpha and beta chains form an alternating ring which encloses part of the gamma chain. F(1) is attached to F(0) by a central stalk formed by the gamma and epsilon chains, while a peripheral stalk is formed by the delta, b and b' chains.</text>
</comment>
<comment type="subcellular location">
    <subcellularLocation>
        <location evidence="1">Plastid</location>
        <location evidence="1">Chloroplast thylakoid membrane</location>
        <topology evidence="1">Multi-pass membrane protein</topology>
    </subcellularLocation>
</comment>
<comment type="miscellaneous">
    <text>In plastids the F-type ATPase is also known as CF(1)CF(0).</text>
</comment>
<comment type="similarity">
    <text evidence="1">Belongs to the ATPase C chain family.</text>
</comment>
<feature type="chain" id="PRO_0000362887" description="ATP synthase subunit c, chloroplastic">
    <location>
        <begin position="1"/>
        <end position="81"/>
    </location>
</feature>
<feature type="transmembrane region" description="Helical" evidence="1">
    <location>
        <begin position="7"/>
        <end position="27"/>
    </location>
</feature>
<feature type="transmembrane region" description="Helical" evidence="1">
    <location>
        <begin position="57"/>
        <end position="77"/>
    </location>
</feature>
<feature type="site" description="Reversibly protonated during proton transport" evidence="1">
    <location>
        <position position="61"/>
    </location>
</feature>
<dbReference type="EMBL" id="AP009369">
    <property type="protein sequence ID" value="BAF50010.1"/>
    <property type="molecule type" value="Genomic_DNA"/>
</dbReference>
<dbReference type="RefSeq" id="YP_001123186.1">
    <property type="nucleotide sequence ID" value="NC_009268.1"/>
</dbReference>
<dbReference type="SMR" id="A4QK05"/>
<dbReference type="GeneID" id="4962617"/>
<dbReference type="GO" id="GO:0009535">
    <property type="term" value="C:chloroplast thylakoid membrane"/>
    <property type="evidence" value="ECO:0007669"/>
    <property type="project" value="UniProtKB-SubCell"/>
</dbReference>
<dbReference type="GO" id="GO:0045259">
    <property type="term" value="C:proton-transporting ATP synthase complex"/>
    <property type="evidence" value="ECO:0007669"/>
    <property type="project" value="UniProtKB-KW"/>
</dbReference>
<dbReference type="GO" id="GO:0033177">
    <property type="term" value="C:proton-transporting two-sector ATPase complex, proton-transporting domain"/>
    <property type="evidence" value="ECO:0007669"/>
    <property type="project" value="InterPro"/>
</dbReference>
<dbReference type="GO" id="GO:0008289">
    <property type="term" value="F:lipid binding"/>
    <property type="evidence" value="ECO:0007669"/>
    <property type="project" value="UniProtKB-KW"/>
</dbReference>
<dbReference type="GO" id="GO:0046933">
    <property type="term" value="F:proton-transporting ATP synthase activity, rotational mechanism"/>
    <property type="evidence" value="ECO:0007669"/>
    <property type="project" value="UniProtKB-UniRule"/>
</dbReference>
<dbReference type="CDD" id="cd18183">
    <property type="entry name" value="ATP-synt_Fo_c_ATPH"/>
    <property type="match status" value="1"/>
</dbReference>
<dbReference type="FunFam" id="1.20.20.10:FF:000001">
    <property type="entry name" value="ATP synthase subunit c, chloroplastic"/>
    <property type="match status" value="1"/>
</dbReference>
<dbReference type="Gene3D" id="1.20.20.10">
    <property type="entry name" value="F1F0 ATP synthase subunit C"/>
    <property type="match status" value="1"/>
</dbReference>
<dbReference type="HAMAP" id="MF_01396">
    <property type="entry name" value="ATP_synth_c_bact"/>
    <property type="match status" value="1"/>
</dbReference>
<dbReference type="InterPro" id="IPR005953">
    <property type="entry name" value="ATP_synth_csu_bac/chlpt"/>
</dbReference>
<dbReference type="InterPro" id="IPR000454">
    <property type="entry name" value="ATP_synth_F0_csu"/>
</dbReference>
<dbReference type="InterPro" id="IPR020537">
    <property type="entry name" value="ATP_synth_F0_csu_DDCD_BS"/>
</dbReference>
<dbReference type="InterPro" id="IPR038662">
    <property type="entry name" value="ATP_synth_F0_csu_sf"/>
</dbReference>
<dbReference type="InterPro" id="IPR002379">
    <property type="entry name" value="ATPase_proteolipid_c-like_dom"/>
</dbReference>
<dbReference type="InterPro" id="IPR035921">
    <property type="entry name" value="F/V-ATP_Csub_sf"/>
</dbReference>
<dbReference type="NCBIfam" id="TIGR01260">
    <property type="entry name" value="ATP_synt_c"/>
    <property type="match status" value="1"/>
</dbReference>
<dbReference type="NCBIfam" id="NF005608">
    <property type="entry name" value="PRK07354.1"/>
    <property type="match status" value="1"/>
</dbReference>
<dbReference type="PANTHER" id="PTHR10031">
    <property type="entry name" value="ATP SYNTHASE LIPID-BINDING PROTEIN, MITOCHONDRIAL"/>
    <property type="match status" value="1"/>
</dbReference>
<dbReference type="PANTHER" id="PTHR10031:SF0">
    <property type="entry name" value="ATPASE PROTEIN 9"/>
    <property type="match status" value="1"/>
</dbReference>
<dbReference type="Pfam" id="PF00137">
    <property type="entry name" value="ATP-synt_C"/>
    <property type="match status" value="1"/>
</dbReference>
<dbReference type="PRINTS" id="PR00124">
    <property type="entry name" value="ATPASEC"/>
</dbReference>
<dbReference type="SUPFAM" id="SSF81333">
    <property type="entry name" value="F1F0 ATP synthase subunit C"/>
    <property type="match status" value="1"/>
</dbReference>
<dbReference type="PROSITE" id="PS00605">
    <property type="entry name" value="ATPASE_C"/>
    <property type="match status" value="1"/>
</dbReference>
<accession>A4QK05</accession>
<keyword id="KW-0066">ATP synthesis</keyword>
<keyword id="KW-0138">CF(0)</keyword>
<keyword id="KW-0150">Chloroplast</keyword>
<keyword id="KW-0375">Hydrogen ion transport</keyword>
<keyword id="KW-0406">Ion transport</keyword>
<keyword id="KW-0446">Lipid-binding</keyword>
<keyword id="KW-0472">Membrane</keyword>
<keyword id="KW-0934">Plastid</keyword>
<keyword id="KW-0793">Thylakoid</keyword>
<keyword id="KW-0812">Transmembrane</keyword>
<keyword id="KW-1133">Transmembrane helix</keyword>
<keyword id="KW-0813">Transport</keyword>
<gene>
    <name evidence="1" type="primary">atpH</name>
</gene>